<name>DAPE_CITK8</name>
<keyword id="KW-0028">Amino-acid biosynthesis</keyword>
<keyword id="KW-0170">Cobalt</keyword>
<keyword id="KW-0220">Diaminopimelate biosynthesis</keyword>
<keyword id="KW-0378">Hydrolase</keyword>
<keyword id="KW-0457">Lysine biosynthesis</keyword>
<keyword id="KW-0479">Metal-binding</keyword>
<keyword id="KW-1185">Reference proteome</keyword>
<keyword id="KW-0862">Zinc</keyword>
<gene>
    <name evidence="1" type="primary">dapE</name>
    <name type="ordered locus">CKO_00316</name>
</gene>
<comment type="function">
    <text evidence="1">Catalyzes the hydrolysis of N-succinyl-L,L-diaminopimelic acid (SDAP), forming succinate and LL-2,6-diaminopimelate (DAP), an intermediate involved in the bacterial biosynthesis of lysine and meso-diaminopimelic acid, an essential component of bacterial cell walls.</text>
</comment>
<comment type="catalytic activity">
    <reaction evidence="1">
        <text>N-succinyl-(2S,6S)-2,6-diaminopimelate + H2O = (2S,6S)-2,6-diaminopimelate + succinate</text>
        <dbReference type="Rhea" id="RHEA:22608"/>
        <dbReference type="ChEBI" id="CHEBI:15377"/>
        <dbReference type="ChEBI" id="CHEBI:30031"/>
        <dbReference type="ChEBI" id="CHEBI:57609"/>
        <dbReference type="ChEBI" id="CHEBI:58087"/>
        <dbReference type="EC" id="3.5.1.18"/>
    </reaction>
</comment>
<comment type="cofactor">
    <cofactor evidence="1">
        <name>Zn(2+)</name>
        <dbReference type="ChEBI" id="CHEBI:29105"/>
    </cofactor>
    <cofactor evidence="1">
        <name>Co(2+)</name>
        <dbReference type="ChEBI" id="CHEBI:48828"/>
    </cofactor>
    <text evidence="1">Binds 2 Zn(2+) or Co(2+) ions per subunit.</text>
</comment>
<comment type="pathway">
    <text evidence="1">Amino-acid biosynthesis; L-lysine biosynthesis via DAP pathway; LL-2,6-diaminopimelate from (S)-tetrahydrodipicolinate (succinylase route): step 3/3.</text>
</comment>
<comment type="subunit">
    <text evidence="1">Homodimer.</text>
</comment>
<comment type="similarity">
    <text evidence="1">Belongs to the peptidase M20A family. DapE subfamily.</text>
</comment>
<organism>
    <name type="scientific">Citrobacter koseri (strain ATCC BAA-895 / CDC 4225-83 / SGSC4696)</name>
    <dbReference type="NCBI Taxonomy" id="290338"/>
    <lineage>
        <taxon>Bacteria</taxon>
        <taxon>Pseudomonadati</taxon>
        <taxon>Pseudomonadota</taxon>
        <taxon>Gammaproteobacteria</taxon>
        <taxon>Enterobacterales</taxon>
        <taxon>Enterobacteriaceae</taxon>
        <taxon>Citrobacter</taxon>
    </lineage>
</organism>
<dbReference type="EC" id="3.5.1.18" evidence="1"/>
<dbReference type="EMBL" id="CP000822">
    <property type="protein sequence ID" value="ABV11479.1"/>
    <property type="molecule type" value="Genomic_DNA"/>
</dbReference>
<dbReference type="RefSeq" id="WP_012131309.1">
    <property type="nucleotide sequence ID" value="NC_009792.1"/>
</dbReference>
<dbReference type="SMR" id="A8ADB6"/>
<dbReference type="STRING" id="290338.CKO_00316"/>
<dbReference type="MEROPS" id="M20.010"/>
<dbReference type="GeneID" id="45134591"/>
<dbReference type="KEGG" id="cko:CKO_00316"/>
<dbReference type="HOGENOM" id="CLU_021802_4_0_6"/>
<dbReference type="OrthoDB" id="9809784at2"/>
<dbReference type="UniPathway" id="UPA00034">
    <property type="reaction ID" value="UER00021"/>
</dbReference>
<dbReference type="Proteomes" id="UP000008148">
    <property type="component" value="Chromosome"/>
</dbReference>
<dbReference type="GO" id="GO:0008777">
    <property type="term" value="F:acetylornithine deacetylase activity"/>
    <property type="evidence" value="ECO:0007669"/>
    <property type="project" value="TreeGrafter"/>
</dbReference>
<dbReference type="GO" id="GO:0050897">
    <property type="term" value="F:cobalt ion binding"/>
    <property type="evidence" value="ECO:0007669"/>
    <property type="project" value="UniProtKB-UniRule"/>
</dbReference>
<dbReference type="GO" id="GO:0009014">
    <property type="term" value="F:succinyl-diaminopimelate desuccinylase activity"/>
    <property type="evidence" value="ECO:0007669"/>
    <property type="project" value="UniProtKB-UniRule"/>
</dbReference>
<dbReference type="GO" id="GO:0008270">
    <property type="term" value="F:zinc ion binding"/>
    <property type="evidence" value="ECO:0007669"/>
    <property type="project" value="UniProtKB-UniRule"/>
</dbReference>
<dbReference type="GO" id="GO:0019877">
    <property type="term" value="P:diaminopimelate biosynthetic process"/>
    <property type="evidence" value="ECO:0007669"/>
    <property type="project" value="UniProtKB-UniRule"/>
</dbReference>
<dbReference type="GO" id="GO:0006526">
    <property type="term" value="P:L-arginine biosynthetic process"/>
    <property type="evidence" value="ECO:0007669"/>
    <property type="project" value="TreeGrafter"/>
</dbReference>
<dbReference type="GO" id="GO:0009089">
    <property type="term" value="P:lysine biosynthetic process via diaminopimelate"/>
    <property type="evidence" value="ECO:0007669"/>
    <property type="project" value="UniProtKB-UniRule"/>
</dbReference>
<dbReference type="CDD" id="cd03891">
    <property type="entry name" value="M20_DapE_proteobac"/>
    <property type="match status" value="1"/>
</dbReference>
<dbReference type="FunFam" id="3.30.70.360:FF:000011">
    <property type="entry name" value="Succinyl-diaminopimelate desuccinylase"/>
    <property type="match status" value="1"/>
</dbReference>
<dbReference type="FunFam" id="3.40.630.10:FF:000005">
    <property type="entry name" value="Succinyl-diaminopimelate desuccinylase"/>
    <property type="match status" value="1"/>
</dbReference>
<dbReference type="FunFam" id="3.40.630.10:FF:000010">
    <property type="entry name" value="Succinyl-diaminopimelate desuccinylase"/>
    <property type="match status" value="1"/>
</dbReference>
<dbReference type="Gene3D" id="3.40.630.10">
    <property type="entry name" value="Zn peptidases"/>
    <property type="match status" value="2"/>
</dbReference>
<dbReference type="HAMAP" id="MF_01690">
    <property type="entry name" value="DapE"/>
    <property type="match status" value="1"/>
</dbReference>
<dbReference type="InterPro" id="IPR001261">
    <property type="entry name" value="ArgE/DapE_CS"/>
</dbReference>
<dbReference type="InterPro" id="IPR036264">
    <property type="entry name" value="Bact_exopeptidase_dim_dom"/>
</dbReference>
<dbReference type="InterPro" id="IPR005941">
    <property type="entry name" value="DapE_proteobac"/>
</dbReference>
<dbReference type="InterPro" id="IPR002933">
    <property type="entry name" value="Peptidase_M20"/>
</dbReference>
<dbReference type="InterPro" id="IPR011650">
    <property type="entry name" value="Peptidase_M20_dimer"/>
</dbReference>
<dbReference type="InterPro" id="IPR050072">
    <property type="entry name" value="Peptidase_M20A"/>
</dbReference>
<dbReference type="NCBIfam" id="TIGR01246">
    <property type="entry name" value="dapE_proteo"/>
    <property type="match status" value="1"/>
</dbReference>
<dbReference type="NCBIfam" id="NF009557">
    <property type="entry name" value="PRK13009.1"/>
    <property type="match status" value="1"/>
</dbReference>
<dbReference type="PANTHER" id="PTHR43808">
    <property type="entry name" value="ACETYLORNITHINE DEACETYLASE"/>
    <property type="match status" value="1"/>
</dbReference>
<dbReference type="PANTHER" id="PTHR43808:SF31">
    <property type="entry name" value="N-ACETYL-L-CITRULLINE DEACETYLASE"/>
    <property type="match status" value="1"/>
</dbReference>
<dbReference type="Pfam" id="PF07687">
    <property type="entry name" value="M20_dimer"/>
    <property type="match status" value="1"/>
</dbReference>
<dbReference type="Pfam" id="PF01546">
    <property type="entry name" value="Peptidase_M20"/>
    <property type="match status" value="1"/>
</dbReference>
<dbReference type="SUPFAM" id="SSF55031">
    <property type="entry name" value="Bacterial exopeptidase dimerisation domain"/>
    <property type="match status" value="1"/>
</dbReference>
<dbReference type="SUPFAM" id="SSF53187">
    <property type="entry name" value="Zn-dependent exopeptidases"/>
    <property type="match status" value="1"/>
</dbReference>
<dbReference type="PROSITE" id="PS00758">
    <property type="entry name" value="ARGE_DAPE_CPG2_1"/>
    <property type="match status" value="1"/>
</dbReference>
<dbReference type="PROSITE" id="PS00759">
    <property type="entry name" value="ARGE_DAPE_CPG2_2"/>
    <property type="match status" value="1"/>
</dbReference>
<feature type="chain" id="PRO_0000375532" description="Succinyl-diaminopimelate desuccinylase">
    <location>
        <begin position="1"/>
        <end position="375"/>
    </location>
</feature>
<feature type="active site" evidence="1">
    <location>
        <position position="68"/>
    </location>
</feature>
<feature type="active site" description="Proton acceptor" evidence="1">
    <location>
        <position position="133"/>
    </location>
</feature>
<feature type="binding site" evidence="1">
    <location>
        <position position="66"/>
    </location>
    <ligand>
        <name>Zn(2+)</name>
        <dbReference type="ChEBI" id="CHEBI:29105"/>
        <label>1</label>
    </ligand>
</feature>
<feature type="binding site" evidence="1">
    <location>
        <position position="99"/>
    </location>
    <ligand>
        <name>Zn(2+)</name>
        <dbReference type="ChEBI" id="CHEBI:29105"/>
        <label>1</label>
    </ligand>
</feature>
<feature type="binding site" evidence="1">
    <location>
        <position position="99"/>
    </location>
    <ligand>
        <name>Zn(2+)</name>
        <dbReference type="ChEBI" id="CHEBI:29105"/>
        <label>2</label>
    </ligand>
</feature>
<feature type="binding site" evidence="1">
    <location>
        <position position="134"/>
    </location>
    <ligand>
        <name>Zn(2+)</name>
        <dbReference type="ChEBI" id="CHEBI:29105"/>
        <label>2</label>
    </ligand>
</feature>
<feature type="binding site" evidence="1">
    <location>
        <position position="162"/>
    </location>
    <ligand>
        <name>Zn(2+)</name>
        <dbReference type="ChEBI" id="CHEBI:29105"/>
        <label>1</label>
    </ligand>
</feature>
<feature type="binding site" evidence="1">
    <location>
        <position position="348"/>
    </location>
    <ligand>
        <name>Zn(2+)</name>
        <dbReference type="ChEBI" id="CHEBI:29105"/>
        <label>2</label>
    </ligand>
</feature>
<sequence>MSCPVIELTQQLIRRPSLSPDDAGCQALMIERLRAIGFTVEHMDFGDTQNFWAWRGQGETLAFAGHTDVVPAGDVDRWINPPFEPTIRDGMLFGRGAADMKGSLAAMVVAAERFVAQHPDHQGRLAFLITSDEEASAKNGTVKVVETLMARNERLDYCLVGEPSSTEIVGDVVKNGRRGSLTCNLTIHGVQGHVAYPHLADNPVHRAAPMLNELVAIEWDQGNEFFPATSMQIANIQAGTGSNNVIPGELFIQFNFRFSTELTDETLKERVHALLDKHQLRYTVDWWLSGQPFLTARGKLVDAVVNAIEHYNEIKPQLLTTGGTSDGRFIARMGAQVVELGPVNATIHKINECVNAADLQLLARMYQRIMEQLVA</sequence>
<proteinExistence type="inferred from homology"/>
<accession>A8ADB6</accession>
<reference key="1">
    <citation type="submission" date="2007-08" db="EMBL/GenBank/DDBJ databases">
        <authorList>
            <consortium name="The Citrobacter koseri Genome Sequencing Project"/>
            <person name="McClelland M."/>
            <person name="Sanderson E.K."/>
            <person name="Porwollik S."/>
            <person name="Spieth J."/>
            <person name="Clifton W.S."/>
            <person name="Latreille P."/>
            <person name="Courtney L."/>
            <person name="Wang C."/>
            <person name="Pepin K."/>
            <person name="Bhonagiri V."/>
            <person name="Nash W."/>
            <person name="Johnson M."/>
            <person name="Thiruvilangam P."/>
            <person name="Wilson R."/>
        </authorList>
    </citation>
    <scope>NUCLEOTIDE SEQUENCE [LARGE SCALE GENOMIC DNA]</scope>
    <source>
        <strain>ATCC BAA-895 / CDC 4225-83 / SGSC4696</strain>
    </source>
</reference>
<evidence type="ECO:0000255" key="1">
    <source>
        <dbReference type="HAMAP-Rule" id="MF_01690"/>
    </source>
</evidence>
<protein>
    <recommendedName>
        <fullName evidence="1">Succinyl-diaminopimelate desuccinylase</fullName>
        <shortName evidence="1">SDAP desuccinylase</shortName>
        <ecNumber evidence="1">3.5.1.18</ecNumber>
    </recommendedName>
    <alternativeName>
        <fullName evidence="1">N-succinyl-LL-2,6-diaminoheptanedioate amidohydrolase</fullName>
    </alternativeName>
</protein>